<protein>
    <recommendedName>
        <fullName evidence="1">NADH-quinone oxidoreductase subunit C</fullName>
        <ecNumber evidence="1">7.1.1.-</ecNumber>
    </recommendedName>
    <alternativeName>
        <fullName evidence="1">NADH dehydrogenase I subunit C</fullName>
    </alternativeName>
    <alternativeName>
        <fullName evidence="1">NDH-1 subunit C</fullName>
    </alternativeName>
</protein>
<reference key="1">
    <citation type="submission" date="2006-12" db="EMBL/GenBank/DDBJ databases">
        <authorList>
            <person name="Hendrix L."/>
            <person name="Mohamoud Y."/>
            <person name="Radune D."/>
            <person name="Shvartsbeyn A."/>
            <person name="Daugherty S."/>
            <person name="Dodson R."/>
            <person name="Durkin A.S."/>
            <person name="Harkins D."/>
            <person name="Huot H."/>
            <person name="Kothari S.P."/>
            <person name="Madupu R."/>
            <person name="Li J."/>
            <person name="Nelson W.C."/>
            <person name="Shrivastava S."/>
            <person name="Giglio M.G."/>
            <person name="Haft D."/>
            <person name="Selengut J."/>
            <person name="Fraser-Ligget C."/>
            <person name="Seshadri R."/>
        </authorList>
    </citation>
    <scope>NUCLEOTIDE SEQUENCE [LARGE SCALE GENOMIC DNA]</scope>
    <source>
        <strain>ATCC 35685 / KC583 / Herrer 020/F12,63</strain>
    </source>
</reference>
<feature type="chain" id="PRO_0000358041" description="NADH-quinone oxidoreductase subunit C">
    <location>
        <begin position="1"/>
        <end position="205"/>
    </location>
</feature>
<comment type="function">
    <text evidence="1">NDH-1 shuttles electrons from NADH, via FMN and iron-sulfur (Fe-S) centers, to quinones in the respiratory chain. The immediate electron acceptor for the enzyme in this species is believed to be ubiquinone. Couples the redox reaction to proton translocation (for every two electrons transferred, four hydrogen ions are translocated across the cytoplasmic membrane), and thus conserves the redox energy in a proton gradient.</text>
</comment>
<comment type="catalytic activity">
    <reaction evidence="1">
        <text>a quinone + NADH + 5 H(+)(in) = a quinol + NAD(+) + 4 H(+)(out)</text>
        <dbReference type="Rhea" id="RHEA:57888"/>
        <dbReference type="ChEBI" id="CHEBI:15378"/>
        <dbReference type="ChEBI" id="CHEBI:24646"/>
        <dbReference type="ChEBI" id="CHEBI:57540"/>
        <dbReference type="ChEBI" id="CHEBI:57945"/>
        <dbReference type="ChEBI" id="CHEBI:132124"/>
    </reaction>
</comment>
<comment type="subunit">
    <text evidence="1">NDH-1 is composed of 14 different subunits. Subunits NuoB, C, D, E, F, and G constitute the peripheral sector of the complex.</text>
</comment>
<comment type="subcellular location">
    <subcellularLocation>
        <location evidence="1">Cell inner membrane</location>
        <topology evidence="1">Peripheral membrane protein</topology>
        <orientation evidence="1">Cytoplasmic side</orientation>
    </subcellularLocation>
</comment>
<comment type="similarity">
    <text evidence="1">Belongs to the complex I 30 kDa subunit family.</text>
</comment>
<proteinExistence type="inferred from homology"/>
<accession>A1USW9</accession>
<evidence type="ECO:0000255" key="1">
    <source>
        <dbReference type="HAMAP-Rule" id="MF_01357"/>
    </source>
</evidence>
<name>NUOC_BARBK</name>
<gene>
    <name evidence="1" type="primary">nuoC</name>
    <name type="ordered locus">BARBAKC583_0780</name>
</gene>
<keyword id="KW-0997">Cell inner membrane</keyword>
<keyword id="KW-1003">Cell membrane</keyword>
<keyword id="KW-0472">Membrane</keyword>
<keyword id="KW-0520">NAD</keyword>
<keyword id="KW-0874">Quinone</keyword>
<keyword id="KW-1278">Translocase</keyword>
<keyword id="KW-0813">Transport</keyword>
<keyword id="KW-0830">Ubiquinone</keyword>
<organism>
    <name type="scientific">Bartonella bacilliformis (strain ATCC 35685 / KC583 / Herrer 020/F12,63)</name>
    <dbReference type="NCBI Taxonomy" id="360095"/>
    <lineage>
        <taxon>Bacteria</taxon>
        <taxon>Pseudomonadati</taxon>
        <taxon>Pseudomonadota</taxon>
        <taxon>Alphaproteobacteria</taxon>
        <taxon>Hyphomicrobiales</taxon>
        <taxon>Bartonellaceae</taxon>
        <taxon>Bartonella</taxon>
    </lineage>
</organism>
<sequence>MATETLVELAAYLKEKLGDKLEESALAFGELTIVSRLDAIIDVLMFIRDDSRCQFINIIDISGVDYPARDKRFDVSYQLLSPFQNLRLRVKVRTDEDVPVPSVCSVYPGAEWYERETYDMYGILFSGHPDLRRILTDYGFEGHPLRKDFPVTGFVECRYDNEAKRVIYEPVVLRQEMRNFDFLSPWEGADYVLPCDKKAKGNGDK</sequence>
<dbReference type="EC" id="7.1.1.-" evidence="1"/>
<dbReference type="EMBL" id="CP000524">
    <property type="protein sequence ID" value="ABM45080.1"/>
    <property type="molecule type" value="Genomic_DNA"/>
</dbReference>
<dbReference type="RefSeq" id="WP_005767064.1">
    <property type="nucleotide sequence ID" value="NC_008783.1"/>
</dbReference>
<dbReference type="SMR" id="A1USW9"/>
<dbReference type="STRING" id="360095.BARBAKC583_0780"/>
<dbReference type="GeneID" id="4684667"/>
<dbReference type="KEGG" id="bbk:BARBAKC583_0780"/>
<dbReference type="PATRIC" id="fig|360095.6.peg.753"/>
<dbReference type="eggNOG" id="COG0852">
    <property type="taxonomic scope" value="Bacteria"/>
</dbReference>
<dbReference type="HOGENOM" id="CLU_042628_2_1_5"/>
<dbReference type="OrthoDB" id="9803286at2"/>
<dbReference type="Proteomes" id="UP000000643">
    <property type="component" value="Chromosome"/>
</dbReference>
<dbReference type="GO" id="GO:0005886">
    <property type="term" value="C:plasma membrane"/>
    <property type="evidence" value="ECO:0007669"/>
    <property type="project" value="UniProtKB-SubCell"/>
</dbReference>
<dbReference type="GO" id="GO:0008137">
    <property type="term" value="F:NADH dehydrogenase (ubiquinone) activity"/>
    <property type="evidence" value="ECO:0007669"/>
    <property type="project" value="InterPro"/>
</dbReference>
<dbReference type="GO" id="GO:0050136">
    <property type="term" value="F:NADH:ubiquinone reductase (non-electrogenic) activity"/>
    <property type="evidence" value="ECO:0007669"/>
    <property type="project" value="UniProtKB-UniRule"/>
</dbReference>
<dbReference type="GO" id="GO:0048038">
    <property type="term" value="F:quinone binding"/>
    <property type="evidence" value="ECO:0007669"/>
    <property type="project" value="UniProtKB-KW"/>
</dbReference>
<dbReference type="Gene3D" id="3.30.460.80">
    <property type="entry name" value="NADH:ubiquinone oxidoreductase, 30kDa subunit"/>
    <property type="match status" value="1"/>
</dbReference>
<dbReference type="HAMAP" id="MF_01357">
    <property type="entry name" value="NDH1_NuoC"/>
    <property type="match status" value="1"/>
</dbReference>
<dbReference type="InterPro" id="IPR010218">
    <property type="entry name" value="NADH_DH_suC"/>
</dbReference>
<dbReference type="InterPro" id="IPR037232">
    <property type="entry name" value="NADH_quin_OxRdtase_su_C/D-like"/>
</dbReference>
<dbReference type="InterPro" id="IPR001268">
    <property type="entry name" value="NADH_UbQ_OxRdtase_30kDa_su"/>
</dbReference>
<dbReference type="InterPro" id="IPR020396">
    <property type="entry name" value="NADH_UbQ_OxRdtase_CS"/>
</dbReference>
<dbReference type="NCBIfam" id="TIGR01961">
    <property type="entry name" value="NuoC_fam"/>
    <property type="match status" value="1"/>
</dbReference>
<dbReference type="NCBIfam" id="NF004730">
    <property type="entry name" value="PRK06074.1-1"/>
    <property type="match status" value="1"/>
</dbReference>
<dbReference type="NCBIfam" id="NF004733">
    <property type="entry name" value="PRK06074.1-5"/>
    <property type="match status" value="1"/>
</dbReference>
<dbReference type="PANTHER" id="PTHR10884:SF14">
    <property type="entry name" value="NADH DEHYDROGENASE [UBIQUINONE] IRON-SULFUR PROTEIN 3, MITOCHONDRIAL"/>
    <property type="match status" value="1"/>
</dbReference>
<dbReference type="PANTHER" id="PTHR10884">
    <property type="entry name" value="NADH DEHYDROGENASE UBIQUINONE IRON-SULFUR PROTEIN 3"/>
    <property type="match status" value="1"/>
</dbReference>
<dbReference type="Pfam" id="PF00329">
    <property type="entry name" value="Complex1_30kDa"/>
    <property type="match status" value="1"/>
</dbReference>
<dbReference type="SUPFAM" id="SSF143243">
    <property type="entry name" value="Nqo5-like"/>
    <property type="match status" value="1"/>
</dbReference>
<dbReference type="PROSITE" id="PS00542">
    <property type="entry name" value="COMPLEX1_30K"/>
    <property type="match status" value="1"/>
</dbReference>